<sequence length="255" mass="28940">MSQEFLARILEQKAREVEQMKLEQIQPLRQTYRLAEFLKNHQDRLQVIAEVKKASPSLGDINLDVDIVQQAQTYEENGAVMISVLTDEVFFKGHLDYLREISSQVEIPTLNKDFIIDEKQIIRARNAGATVILLIVAALSEERLKELYDYATELGLEVLVETHNLAELEVAHRLGAEIIGVNNRNLTTFEVDLQTSVDLAPYFEEGRYYISESAIFTGQDAERLAPYFNGILVGTALMQAENVAQRIKELQIDKG</sequence>
<evidence type="ECO:0000255" key="1">
    <source>
        <dbReference type="HAMAP-Rule" id="MF_00134"/>
    </source>
</evidence>
<reference key="1">
    <citation type="journal article" date="2001" name="Microb. Drug Resist.">
        <title>Annotated draft genomic sequence from a Streptococcus pneumoniae type 19F clinical isolate.</title>
        <authorList>
            <person name="Dopazo J."/>
            <person name="Mendoza A."/>
            <person name="Herrero J."/>
            <person name="Caldara F."/>
            <person name="Humbert Y."/>
            <person name="Friedli L."/>
            <person name="Guerrier M."/>
            <person name="Grand-Schenk E."/>
            <person name="Gandin C."/>
            <person name="de Francesco M."/>
            <person name="Polissi A."/>
            <person name="Buell G."/>
            <person name="Feger G."/>
            <person name="Garcia E."/>
            <person name="Peitsch M."/>
            <person name="Garcia-Bustos J.F."/>
        </authorList>
    </citation>
    <scope>NUCLEOTIDE SEQUENCE [LARGE SCALE GENOMIC DNA]</scope>
    <source>
        <strain>G54</strain>
    </source>
</reference>
<reference key="2">
    <citation type="submission" date="2008-03" db="EMBL/GenBank/DDBJ databases">
        <title>Pneumococcal beta glucoside metabolism investigated by whole genome comparison.</title>
        <authorList>
            <person name="Mulas L."/>
            <person name="Trappetti C."/>
            <person name="Hakenbeck R."/>
            <person name="Iannelli F."/>
            <person name="Pozzi G."/>
            <person name="Davidsen T.M."/>
            <person name="Tettelin H."/>
            <person name="Oggioni M."/>
        </authorList>
    </citation>
    <scope>NUCLEOTIDE SEQUENCE [LARGE SCALE GENOMIC DNA]</scope>
    <source>
        <strain>G54</strain>
    </source>
</reference>
<protein>
    <recommendedName>
        <fullName evidence="1">Indole-3-glycerol phosphate synthase</fullName>
        <shortName evidence="1">IGPS</shortName>
        <ecNumber evidence="1">4.1.1.48</ecNumber>
    </recommendedName>
</protein>
<feature type="chain" id="PRO_1000095897" description="Indole-3-glycerol phosphate synthase">
    <location>
        <begin position="1"/>
        <end position="255"/>
    </location>
</feature>
<keyword id="KW-0028">Amino-acid biosynthesis</keyword>
<keyword id="KW-0057">Aromatic amino acid biosynthesis</keyword>
<keyword id="KW-0210">Decarboxylase</keyword>
<keyword id="KW-0456">Lyase</keyword>
<keyword id="KW-0822">Tryptophan biosynthesis</keyword>
<organism>
    <name type="scientific">Streptococcus pneumoniae serotype 19F (strain G54)</name>
    <dbReference type="NCBI Taxonomy" id="512566"/>
    <lineage>
        <taxon>Bacteria</taxon>
        <taxon>Bacillati</taxon>
        <taxon>Bacillota</taxon>
        <taxon>Bacilli</taxon>
        <taxon>Lactobacillales</taxon>
        <taxon>Streptococcaceae</taxon>
        <taxon>Streptococcus</taxon>
    </lineage>
</organism>
<dbReference type="EC" id="4.1.1.48" evidence="1"/>
<dbReference type="EMBL" id="CP001015">
    <property type="protein sequence ID" value="ACF55982.1"/>
    <property type="molecule type" value="Genomic_DNA"/>
</dbReference>
<dbReference type="SMR" id="B5E7M5"/>
<dbReference type="KEGG" id="spx:SPG_1710"/>
<dbReference type="HOGENOM" id="CLU_034247_2_1_9"/>
<dbReference type="UniPathway" id="UPA00035">
    <property type="reaction ID" value="UER00043"/>
</dbReference>
<dbReference type="GO" id="GO:0004425">
    <property type="term" value="F:indole-3-glycerol-phosphate synthase activity"/>
    <property type="evidence" value="ECO:0007669"/>
    <property type="project" value="UniProtKB-UniRule"/>
</dbReference>
<dbReference type="GO" id="GO:0004640">
    <property type="term" value="F:phosphoribosylanthranilate isomerase activity"/>
    <property type="evidence" value="ECO:0007669"/>
    <property type="project" value="TreeGrafter"/>
</dbReference>
<dbReference type="GO" id="GO:0000162">
    <property type="term" value="P:L-tryptophan biosynthetic process"/>
    <property type="evidence" value="ECO:0007669"/>
    <property type="project" value="UniProtKB-UniRule"/>
</dbReference>
<dbReference type="CDD" id="cd00331">
    <property type="entry name" value="IGPS"/>
    <property type="match status" value="1"/>
</dbReference>
<dbReference type="FunFam" id="3.20.20.70:FF:000024">
    <property type="entry name" value="Indole-3-glycerol phosphate synthase"/>
    <property type="match status" value="1"/>
</dbReference>
<dbReference type="Gene3D" id="3.20.20.70">
    <property type="entry name" value="Aldolase class I"/>
    <property type="match status" value="1"/>
</dbReference>
<dbReference type="HAMAP" id="MF_00134_B">
    <property type="entry name" value="IGPS_B"/>
    <property type="match status" value="1"/>
</dbReference>
<dbReference type="InterPro" id="IPR013785">
    <property type="entry name" value="Aldolase_TIM"/>
</dbReference>
<dbReference type="InterPro" id="IPR045186">
    <property type="entry name" value="Indole-3-glycerol_P_synth"/>
</dbReference>
<dbReference type="InterPro" id="IPR013798">
    <property type="entry name" value="Indole-3-glycerol_P_synth_dom"/>
</dbReference>
<dbReference type="InterPro" id="IPR001468">
    <property type="entry name" value="Indole-3-GlycerolPSynthase_CS"/>
</dbReference>
<dbReference type="InterPro" id="IPR011060">
    <property type="entry name" value="RibuloseP-bd_barrel"/>
</dbReference>
<dbReference type="NCBIfam" id="NF001371">
    <property type="entry name" value="PRK00278.1-3"/>
    <property type="match status" value="1"/>
</dbReference>
<dbReference type="NCBIfam" id="NF001377">
    <property type="entry name" value="PRK00278.2-4"/>
    <property type="match status" value="1"/>
</dbReference>
<dbReference type="PANTHER" id="PTHR22854:SF2">
    <property type="entry name" value="INDOLE-3-GLYCEROL-PHOSPHATE SYNTHASE"/>
    <property type="match status" value="1"/>
</dbReference>
<dbReference type="PANTHER" id="PTHR22854">
    <property type="entry name" value="TRYPTOPHAN BIOSYNTHESIS PROTEIN"/>
    <property type="match status" value="1"/>
</dbReference>
<dbReference type="Pfam" id="PF00218">
    <property type="entry name" value="IGPS"/>
    <property type="match status" value="1"/>
</dbReference>
<dbReference type="SUPFAM" id="SSF51366">
    <property type="entry name" value="Ribulose-phoshate binding barrel"/>
    <property type="match status" value="1"/>
</dbReference>
<dbReference type="PROSITE" id="PS00614">
    <property type="entry name" value="IGPS"/>
    <property type="match status" value="1"/>
</dbReference>
<accession>B5E7M5</accession>
<gene>
    <name evidence="1" type="primary">trpC</name>
    <name type="ordered locus">SPG_1710</name>
</gene>
<comment type="catalytic activity">
    <reaction evidence="1">
        <text>1-(2-carboxyphenylamino)-1-deoxy-D-ribulose 5-phosphate + H(+) = (1S,2R)-1-C-(indol-3-yl)glycerol 3-phosphate + CO2 + H2O</text>
        <dbReference type="Rhea" id="RHEA:23476"/>
        <dbReference type="ChEBI" id="CHEBI:15377"/>
        <dbReference type="ChEBI" id="CHEBI:15378"/>
        <dbReference type="ChEBI" id="CHEBI:16526"/>
        <dbReference type="ChEBI" id="CHEBI:58613"/>
        <dbReference type="ChEBI" id="CHEBI:58866"/>
        <dbReference type="EC" id="4.1.1.48"/>
    </reaction>
</comment>
<comment type="pathway">
    <text evidence="1">Amino-acid biosynthesis; L-tryptophan biosynthesis; L-tryptophan from chorismate: step 4/5.</text>
</comment>
<comment type="similarity">
    <text evidence="1">Belongs to the TrpC family.</text>
</comment>
<proteinExistence type="inferred from homology"/>
<name>TRPC_STRP4</name>